<feature type="chain" id="PRO_0000266870" description="Probable GTP-binding protein EngB">
    <location>
        <begin position="1"/>
        <end position="223"/>
    </location>
</feature>
<feature type="domain" description="EngB-type G" evidence="1">
    <location>
        <begin position="49"/>
        <end position="223"/>
    </location>
</feature>
<feature type="binding site" evidence="1">
    <location>
        <begin position="57"/>
        <end position="64"/>
    </location>
    <ligand>
        <name>GTP</name>
        <dbReference type="ChEBI" id="CHEBI:37565"/>
    </ligand>
</feature>
<feature type="binding site" evidence="1">
    <location>
        <position position="64"/>
    </location>
    <ligand>
        <name>Mg(2+)</name>
        <dbReference type="ChEBI" id="CHEBI:18420"/>
    </ligand>
</feature>
<feature type="binding site" evidence="1">
    <location>
        <begin position="84"/>
        <end position="88"/>
    </location>
    <ligand>
        <name>GTP</name>
        <dbReference type="ChEBI" id="CHEBI:37565"/>
    </ligand>
</feature>
<feature type="binding site" evidence="1">
    <location>
        <position position="86"/>
    </location>
    <ligand>
        <name>Mg(2+)</name>
        <dbReference type="ChEBI" id="CHEBI:18420"/>
    </ligand>
</feature>
<feature type="binding site" evidence="1">
    <location>
        <begin position="102"/>
        <end position="105"/>
    </location>
    <ligand>
        <name>GTP</name>
        <dbReference type="ChEBI" id="CHEBI:37565"/>
    </ligand>
</feature>
<feature type="binding site" evidence="1">
    <location>
        <begin position="169"/>
        <end position="172"/>
    </location>
    <ligand>
        <name>GTP</name>
        <dbReference type="ChEBI" id="CHEBI:37565"/>
    </ligand>
</feature>
<feature type="binding site" evidence="1">
    <location>
        <begin position="203"/>
        <end position="205"/>
    </location>
    <ligand>
        <name>GTP</name>
        <dbReference type="ChEBI" id="CHEBI:37565"/>
    </ligand>
</feature>
<evidence type="ECO:0000255" key="1">
    <source>
        <dbReference type="HAMAP-Rule" id="MF_00321"/>
    </source>
</evidence>
<dbReference type="EMBL" id="CP000394">
    <property type="protein sequence ID" value="ABI61625.1"/>
    <property type="molecule type" value="Genomic_DNA"/>
</dbReference>
<dbReference type="RefSeq" id="WP_011631434.1">
    <property type="nucleotide sequence ID" value="NC_008343.2"/>
</dbReference>
<dbReference type="SMR" id="Q0BU77"/>
<dbReference type="STRING" id="391165.GbCGDNIH1_0727"/>
<dbReference type="GeneID" id="69744980"/>
<dbReference type="KEGG" id="gbe:GbCGDNIH1_0727"/>
<dbReference type="eggNOG" id="COG0218">
    <property type="taxonomic scope" value="Bacteria"/>
</dbReference>
<dbReference type="HOGENOM" id="CLU_033732_2_0_5"/>
<dbReference type="OrthoDB" id="9804921at2"/>
<dbReference type="Proteomes" id="UP000001963">
    <property type="component" value="Chromosome"/>
</dbReference>
<dbReference type="GO" id="GO:0005829">
    <property type="term" value="C:cytosol"/>
    <property type="evidence" value="ECO:0007669"/>
    <property type="project" value="TreeGrafter"/>
</dbReference>
<dbReference type="GO" id="GO:0005525">
    <property type="term" value="F:GTP binding"/>
    <property type="evidence" value="ECO:0007669"/>
    <property type="project" value="UniProtKB-UniRule"/>
</dbReference>
<dbReference type="GO" id="GO:0046872">
    <property type="term" value="F:metal ion binding"/>
    <property type="evidence" value="ECO:0007669"/>
    <property type="project" value="UniProtKB-KW"/>
</dbReference>
<dbReference type="GO" id="GO:0000917">
    <property type="term" value="P:division septum assembly"/>
    <property type="evidence" value="ECO:0007669"/>
    <property type="project" value="UniProtKB-KW"/>
</dbReference>
<dbReference type="CDD" id="cd01876">
    <property type="entry name" value="YihA_EngB"/>
    <property type="match status" value="1"/>
</dbReference>
<dbReference type="Gene3D" id="3.40.50.300">
    <property type="entry name" value="P-loop containing nucleotide triphosphate hydrolases"/>
    <property type="match status" value="1"/>
</dbReference>
<dbReference type="HAMAP" id="MF_00321">
    <property type="entry name" value="GTPase_EngB"/>
    <property type="match status" value="1"/>
</dbReference>
<dbReference type="InterPro" id="IPR030393">
    <property type="entry name" value="G_ENGB_dom"/>
</dbReference>
<dbReference type="InterPro" id="IPR006073">
    <property type="entry name" value="GTP-bd"/>
</dbReference>
<dbReference type="InterPro" id="IPR019987">
    <property type="entry name" value="GTP-bd_ribosome_bio_YsxC"/>
</dbReference>
<dbReference type="InterPro" id="IPR027417">
    <property type="entry name" value="P-loop_NTPase"/>
</dbReference>
<dbReference type="NCBIfam" id="TIGR03598">
    <property type="entry name" value="GTPase_YsxC"/>
    <property type="match status" value="1"/>
</dbReference>
<dbReference type="PANTHER" id="PTHR11649:SF13">
    <property type="entry name" value="ENGB-TYPE G DOMAIN-CONTAINING PROTEIN"/>
    <property type="match status" value="1"/>
</dbReference>
<dbReference type="PANTHER" id="PTHR11649">
    <property type="entry name" value="MSS1/TRME-RELATED GTP-BINDING PROTEIN"/>
    <property type="match status" value="1"/>
</dbReference>
<dbReference type="Pfam" id="PF01926">
    <property type="entry name" value="MMR_HSR1"/>
    <property type="match status" value="1"/>
</dbReference>
<dbReference type="SUPFAM" id="SSF52540">
    <property type="entry name" value="P-loop containing nucleoside triphosphate hydrolases"/>
    <property type="match status" value="1"/>
</dbReference>
<dbReference type="PROSITE" id="PS51706">
    <property type="entry name" value="G_ENGB"/>
    <property type="match status" value="1"/>
</dbReference>
<reference key="1">
    <citation type="journal article" date="2007" name="J. Bacteriol.">
        <title>Genome sequence analysis of the emerging human pathogenic acetic acid bacterium Granulibacter bethesdensis.</title>
        <authorList>
            <person name="Greenberg D.E."/>
            <person name="Porcella S.F."/>
            <person name="Zelazny A.M."/>
            <person name="Virtaneva K."/>
            <person name="Sturdevant D.E."/>
            <person name="Kupko J.J. III"/>
            <person name="Barbian K.D."/>
            <person name="Babar A."/>
            <person name="Dorward D.W."/>
            <person name="Holland S.M."/>
        </authorList>
    </citation>
    <scope>NUCLEOTIDE SEQUENCE [LARGE SCALE GENOMIC DNA]</scope>
    <source>
        <strain>ATCC BAA-1260 / CGDNIH1</strain>
    </source>
</reference>
<accession>Q0BU77</accession>
<organism>
    <name type="scientific">Granulibacter bethesdensis (strain ATCC BAA-1260 / CGDNIH1)</name>
    <dbReference type="NCBI Taxonomy" id="391165"/>
    <lineage>
        <taxon>Bacteria</taxon>
        <taxon>Pseudomonadati</taxon>
        <taxon>Pseudomonadota</taxon>
        <taxon>Alphaproteobacteria</taxon>
        <taxon>Acetobacterales</taxon>
        <taxon>Acetobacteraceae</taxon>
        <taxon>Granulibacter</taxon>
    </lineage>
</organism>
<comment type="function">
    <text evidence="1">Necessary for normal cell division and for the maintenance of normal septation.</text>
</comment>
<comment type="cofactor">
    <cofactor evidence="1">
        <name>Mg(2+)</name>
        <dbReference type="ChEBI" id="CHEBI:18420"/>
    </cofactor>
</comment>
<comment type="similarity">
    <text evidence="1">Belongs to the TRAFAC class TrmE-Era-EngA-EngB-Septin-like GTPase superfamily. EngB GTPase family.</text>
</comment>
<keyword id="KW-0131">Cell cycle</keyword>
<keyword id="KW-0132">Cell division</keyword>
<keyword id="KW-0342">GTP-binding</keyword>
<keyword id="KW-0460">Magnesium</keyword>
<keyword id="KW-0479">Metal-binding</keyword>
<keyword id="KW-0547">Nucleotide-binding</keyword>
<keyword id="KW-1185">Reference proteome</keyword>
<keyword id="KW-0717">Septation</keyword>
<proteinExistence type="inferred from homology"/>
<gene>
    <name evidence="1" type="primary">engB</name>
    <name type="ordered locus">GbCGDNIH1_0727</name>
</gene>
<name>ENGB_GRABC</name>
<protein>
    <recommendedName>
        <fullName evidence="1">Probable GTP-binding protein EngB</fullName>
    </recommendedName>
</protein>
<sequence>MSDQTPQFGQTPSEAEPDAVALEAGRKLFAGECTFFHGTQRLDQLPPPMGVEIAFAGRSNVGKSTLVNALTGRKTLARASSQPGRTKQLNFFNLADQLVLVDMPGYGYAQAAKDVKEDWQGLMFSYLRGRPNLRRVMLLVDARVEFKASDIAVMELLDKAAVTFQLVVTKADAVKPTPLQRRVADVYAAARAHPAAHPHVFVTSSDTGSGIAELRAALAGLTD</sequence>